<sequence>MDVRICLLLFLISNPSSCIQETYNEESCSTVTRGYKSVLRTGWYTNVFNLEIGNVENITCNDGPSLIDTELVLTKNALRELKTVSADQVAKESRLSSPRRRRFVLGAIALGVATAAAVTAGVALAKTIRLEGEVKAIKNALRNTNEAVSTLGNGVRVLATAVNDLKEFISKKLTPAINQNKCNIADIKMAISFGQNNRRFLNVVRQFSDSAGITSAVSLDLMTDDELVRAINRMPTSSGQISLMLNNRAMVRRKGFGILIGVYDGTVVYMVQLPIFGVIETPCWRVVAAPLCRKEKGNYACILREDQGWYCTNAGSTAYYPNKDDCEVRDDYVFCDTAAGINVALEVEQCNYNISTSKYPCKVSTGRHPVSMVALTPLGGLVSCYESVSCSIGSNKVGIIKQLGKGCTHIPNNEADTITIDNTVYQLSKVVGEQRTIKGAPVVNNFNPILFPEDQFNVALDQVFESIDRSQDLIDKSNDLLGADAKSKAGIAIAIVVLVILGIFFLLAVIYYCSRVRKTKPKHDYPATTGHSSMAYVS</sequence>
<name>FUS_TRTV</name>
<feature type="signal peptide" evidence="4">
    <location>
        <begin position="1"/>
        <end position="18"/>
    </location>
</feature>
<feature type="chain" id="PRO_0000039246" description="Fusion glycoprotein F0">
    <location>
        <begin position="19"/>
        <end position="538"/>
    </location>
</feature>
<feature type="chain" id="PRO_0000039247" description="Fusion glycoprotein F2">
    <location>
        <begin position="19"/>
        <end position="102"/>
    </location>
</feature>
<feature type="chain" id="PRO_0000039248" description="Fusion glycoprotein F1">
    <location>
        <begin position="103"/>
        <end position="538"/>
    </location>
</feature>
<feature type="topological domain" description="Extracellular" evidence="1">
    <location>
        <begin position="19"/>
        <end position="489"/>
    </location>
</feature>
<feature type="transmembrane region" description="Helical" evidence="4">
    <location>
        <begin position="490"/>
        <end position="510"/>
    </location>
</feature>
<feature type="topological domain" description="Cytoplasmic" evidence="1">
    <location>
        <begin position="511"/>
        <end position="538"/>
    </location>
</feature>
<feature type="region of interest" description="Fusion peptide" evidence="3">
    <location>
        <begin position="103"/>
        <end position="127"/>
    </location>
</feature>
<feature type="region of interest" description="Fusion peptide" evidence="1">
    <location>
        <begin position="103"/>
        <end position="124"/>
    </location>
</feature>
<feature type="coiled-coil region" evidence="4">
    <location>
        <begin position="125"/>
        <end position="153"/>
    </location>
</feature>
<feature type="coiled-coil region" evidence="4">
    <location>
        <begin position="459"/>
        <end position="484"/>
    </location>
</feature>
<feature type="site" description="Cleavage; by host" evidence="1">
    <location>
        <begin position="102"/>
        <end position="103"/>
    </location>
</feature>
<feature type="lipid moiety-binding region" description="S-palmitoyl cysteine; by host" evidence="1">
    <location>
        <position position="513"/>
    </location>
</feature>
<feature type="glycosylation site" description="N-linked (GlcNAc...) asparagine; by host" evidence="4">
    <location>
        <position position="57"/>
    </location>
</feature>
<feature type="glycosylation site" description="N-linked (GlcNAc...) asparagine; by host" evidence="4">
    <location>
        <position position="353"/>
    </location>
</feature>
<feature type="disulfide bond" description="Interchain (between F2 and F1 chains)" evidence="2">
    <location>
        <begin position="28"/>
        <end position="407"/>
    </location>
</feature>
<feature type="disulfide bond" description="Interchain (between F2 and F1 chains)" evidence="2">
    <location>
        <begin position="60"/>
        <end position="182"/>
    </location>
</feature>
<feature type="disulfide bond" evidence="2">
    <location>
        <begin position="283"/>
        <end position="311"/>
    </location>
</feature>
<feature type="disulfide bond" evidence="2">
    <location>
        <begin position="292"/>
        <end position="301"/>
    </location>
</feature>
<feature type="disulfide bond" evidence="2">
    <location>
        <begin position="326"/>
        <end position="335"/>
    </location>
</feature>
<feature type="disulfide bond" evidence="2">
    <location>
        <begin position="350"/>
        <end position="361"/>
    </location>
</feature>
<feature type="disulfide bond" evidence="2">
    <location>
        <begin position="384"/>
        <end position="390"/>
    </location>
</feature>
<proteinExistence type="evidence at transcript level"/>
<gene>
    <name type="primary">F</name>
</gene>
<accession>P24614</accession>
<keyword id="KW-0165">Cleavage on pair of basic residues</keyword>
<keyword id="KW-0175">Coiled coil</keyword>
<keyword id="KW-1015">Disulfide bond</keyword>
<keyword id="KW-1169">Fusion of virus membrane with host cell membrane</keyword>
<keyword id="KW-1168">Fusion of virus membrane with host membrane</keyword>
<keyword id="KW-0325">Glycoprotein</keyword>
<keyword id="KW-1032">Host cell membrane</keyword>
<keyword id="KW-1040">Host Golgi apparatus</keyword>
<keyword id="KW-1043">Host membrane</keyword>
<keyword id="KW-0449">Lipoprotein</keyword>
<keyword id="KW-0472">Membrane</keyword>
<keyword id="KW-0564">Palmitate</keyword>
<keyword id="KW-0732">Signal</keyword>
<keyword id="KW-0812">Transmembrane</keyword>
<keyword id="KW-1133">Transmembrane helix</keyword>
<keyword id="KW-0261">Viral envelope protein</keyword>
<keyword id="KW-1162">Viral penetration into host cytoplasm</keyword>
<keyword id="KW-0946">Virion</keyword>
<keyword id="KW-1160">Virus entry into host cell</keyword>
<protein>
    <recommendedName>
        <fullName>Fusion glycoprotein F0</fullName>
    </recommendedName>
    <component>
        <recommendedName>
            <fullName>Fusion glycoprotein F2</fullName>
        </recommendedName>
    </component>
    <component>
        <recommendedName>
            <fullName>Fusion glycoprotein F1</fullName>
        </recommendedName>
    </component>
</protein>
<comment type="function">
    <molecule>Fusion glycoprotein F0</molecule>
    <text evidence="2">Inactive precursor that is cleaved to give rise to the mature F1 and F2 fusion glycoproteins.</text>
</comment>
<comment type="function">
    <molecule>Fusion glycoprotein F1</molecule>
    <text evidence="2">Class I viral fusion protein. Under the current model, the protein has at least 3 conformational states: pre-fusion native state, pre-hairpin intermediate state, and post-fusion hairpin state. During viral and plasma cell membrane fusion, the coiled coil regions assume a trimer-of-hairpins structure, positioning the fusion peptide in close proximity to the C-terminal region of the ectodomain. The formation of this structure appears to drive apposition and subsequent fusion of viral and cellular membranes leading to delivery of the nucleocapsid into the cytoplasm. This fusion is pH independent and occurs at the plasma or endosomal membrane. The trimer of F1-F2 (F protein) also facilitates the attachment to host cell by binding to host heparan sulfate.</text>
</comment>
<comment type="function">
    <molecule>Fusion glycoprotein F2</molecule>
    <text evidence="2">Major determinant of the species specificity of RSV infection. The trimer of F1-F2 (F protein) also facilitates the attachment to host cell by binding to host heparan sulfate.</text>
</comment>
<comment type="subunit">
    <molecule>Fusion glycoprotein F1</molecule>
    <text evidence="2">Homotrimer. Heterodimer with fusion protein F2; disulfide-linked. As a heterodimer with F2, interacts with host heparan sulfate. Part of a complex composed of F1, F2 and G glycoproteins.</text>
</comment>
<comment type="subunit">
    <molecule>Fusion glycoprotein F2</molecule>
    <text evidence="2">Homotrimer. Heterodimer with fusion protein F1; disulfide-linked. As a heterodimer with F1, interacts with host heparan sulfate. Part of a complex composed of F1, F2 and G glycoproteins.</text>
</comment>
<comment type="subcellular location">
    <molecule>Fusion glycoprotein F0</molecule>
    <subcellularLocation>
        <location evidence="2">Host Golgi apparatus membrane</location>
        <topology evidence="2">Single-pass membrane protein</topology>
    </subcellularLocation>
</comment>
<comment type="subcellular location">
    <molecule>Fusion glycoprotein F1</molecule>
    <subcellularLocation>
        <location evidence="2">Virion membrane</location>
        <topology evidence="2">Single-pass type I membrane protein</topology>
    </subcellularLocation>
    <subcellularLocation>
        <location evidence="2">Host cell membrane</location>
        <topology evidence="2">Single-pass membrane protein</topology>
    </subcellularLocation>
    <text evidence="2">Localized at the host apical membrane.</text>
</comment>
<comment type="subcellular location">
    <molecule>Fusion glycoprotein F2</molecule>
    <subcellularLocation>
        <location evidence="2">Virion membrane</location>
    </subcellularLocation>
    <subcellularLocation>
        <location evidence="2">Host cell membrane</location>
    </subcellularLocation>
    <text evidence="2">Localized at the host apical membrane.</text>
</comment>
<comment type="domain">
    <molecule>Fusion glycoprotein F0</molecule>
    <text evidence="2 3">The N-terminus is a hydrophobic fusion peptide that inserts into the target host membrane (By similarity). It is buried in the center of the trimer cavity before cleavage. The coiled coil (heptad repeat) regions are probably involved in homotrimerization, heterodimerization and in the formation of a fusion-active hairpin structure (By similarity).</text>
</comment>
<comment type="domain">
    <molecule>Fusion glycoprotein F1</molecule>
    <text evidence="2 3">The N-terminus is a hydrophobic fusion peptide that inserts into the target host membrane (By similarity). It is buried in the center of the trimer cavity before cleavage. The coiled coil (heptad repeat) regions are probably involved in homotrimerization, heterodimerization and in the formation of a fusion-active hairpin structure (By similarity).</text>
</comment>
<comment type="PTM">
    <molecule>Fusion glycoprotein F0</molecule>
    <text evidence="2">The F glycoprotein is synthesized as a F0 inactive precursor that is heavily N-glycosylated and processed.</text>
</comment>
<comment type="similarity">
    <text evidence="5">Belongs to the paramyxoviruses fusion glycoprotein family.</text>
</comment>
<reference key="1">
    <citation type="journal article" date="1991" name="J. Gen. Virol.">
        <title>Deduced amino acid sequence of the fusion glycoprotein of turkey rhinotracheitis virus has greater identity with that of human respiratory syncytial virus, a pneumovirus, than that of paramyxoviruses and morbilliviruses.</title>
        <authorList>
            <person name="Yu Q."/>
            <person name="Davis P.J."/>
            <person name="Barrett T."/>
            <person name="Binns M.M."/>
            <person name="Boursnell M.E.G."/>
            <person name="Cavanagh D."/>
        </authorList>
    </citation>
    <scope>NUCLEOTIDE SEQUENCE</scope>
    <source>
        <strain>UK/3B/85</strain>
    </source>
</reference>
<reference key="2">
    <citation type="journal article" date="1992" name="J. Gen. Virol.">
        <title>Sequence analysis of the 22K, SH and G genes of turkey rhinotracheitis virus and their intergenic regions reveals a gene order different from that of other pneumoviruses.</title>
        <authorList>
            <person name="Ling R."/>
            <person name="Easton A.J."/>
            <person name="Pringle C.R."/>
        </authorList>
    </citation>
    <scope>NUCLEOTIDE SEQUENCE OF 500-538</scope>
</reference>
<dbReference type="EMBL" id="D00850">
    <property type="protein sequence ID" value="BAA00726.1"/>
    <property type="molecule type" value="Genomic_RNA"/>
</dbReference>
<dbReference type="EMBL" id="S40185">
    <property type="protein sequence ID" value="AAB22543.1"/>
    <property type="molecule type" value="mRNA"/>
</dbReference>
<dbReference type="PIR" id="JQ0938">
    <property type="entry name" value="VGNZTR"/>
</dbReference>
<dbReference type="SMR" id="P24614"/>
<dbReference type="GlyCosmos" id="P24614">
    <property type="glycosylation" value="2 sites, No reported glycans"/>
</dbReference>
<dbReference type="GO" id="GO:0044178">
    <property type="term" value="C:host cell Golgi membrane"/>
    <property type="evidence" value="ECO:0007669"/>
    <property type="project" value="UniProtKB-SubCell"/>
</dbReference>
<dbReference type="GO" id="GO:0020002">
    <property type="term" value="C:host cell plasma membrane"/>
    <property type="evidence" value="ECO:0007669"/>
    <property type="project" value="UniProtKB-SubCell"/>
</dbReference>
<dbReference type="GO" id="GO:0016020">
    <property type="term" value="C:membrane"/>
    <property type="evidence" value="ECO:0007669"/>
    <property type="project" value="UniProtKB-KW"/>
</dbReference>
<dbReference type="GO" id="GO:0019031">
    <property type="term" value="C:viral envelope"/>
    <property type="evidence" value="ECO:0007669"/>
    <property type="project" value="UniProtKB-KW"/>
</dbReference>
<dbReference type="GO" id="GO:0055036">
    <property type="term" value="C:virion membrane"/>
    <property type="evidence" value="ECO:0007669"/>
    <property type="project" value="UniProtKB-SubCell"/>
</dbReference>
<dbReference type="GO" id="GO:0019064">
    <property type="term" value="P:fusion of virus membrane with host plasma membrane"/>
    <property type="evidence" value="ECO:0007669"/>
    <property type="project" value="UniProtKB-KW"/>
</dbReference>
<dbReference type="GO" id="GO:0046718">
    <property type="term" value="P:symbiont entry into host cell"/>
    <property type="evidence" value="ECO:0007669"/>
    <property type="project" value="UniProtKB-KW"/>
</dbReference>
<dbReference type="Gene3D" id="1.10.287.2480">
    <property type="match status" value="2"/>
</dbReference>
<dbReference type="InterPro" id="IPR000776">
    <property type="entry name" value="Fusion_F0_Paramyxovir"/>
</dbReference>
<dbReference type="Pfam" id="PF00523">
    <property type="entry name" value="Fusion_gly"/>
    <property type="match status" value="1"/>
</dbReference>
<dbReference type="SUPFAM" id="SSF58069">
    <property type="entry name" value="Virus ectodomain"/>
    <property type="match status" value="2"/>
</dbReference>
<organismHost>
    <name type="scientific">Meleagris gallopavo</name>
    <name type="common">Wild turkey</name>
    <dbReference type="NCBI Taxonomy" id="9103"/>
</organismHost>
<organism>
    <name type="scientific">Turkey rhinotracheitis virus</name>
    <name type="common">TRTV</name>
    <dbReference type="NCBI Taxonomy" id="11264"/>
    <lineage>
        <taxon>Viruses</taxon>
        <taxon>Riboviria</taxon>
        <taxon>Orthornavirae</taxon>
        <taxon>Negarnaviricota</taxon>
        <taxon>Haploviricotina</taxon>
        <taxon>Monjiviricetes</taxon>
        <taxon>Mononegavirales</taxon>
        <taxon>Pneumoviridae</taxon>
        <taxon>Metapneumovirus</taxon>
        <taxon>Metapneumovirus avis</taxon>
    </lineage>
</organism>
<evidence type="ECO:0000250" key="1"/>
<evidence type="ECO:0000250" key="2">
    <source>
        <dbReference type="UniProtKB" id="P03420"/>
    </source>
</evidence>
<evidence type="ECO:0000250" key="3">
    <source>
        <dbReference type="UniProtKB" id="P11209"/>
    </source>
</evidence>
<evidence type="ECO:0000255" key="4"/>
<evidence type="ECO:0000305" key="5"/>